<organism>
    <name type="scientific">Halorhodospira halophila (strain DSM 244 / SL1)</name>
    <name type="common">Ectothiorhodospira halophila (strain DSM 244 / SL1)</name>
    <dbReference type="NCBI Taxonomy" id="349124"/>
    <lineage>
        <taxon>Bacteria</taxon>
        <taxon>Pseudomonadati</taxon>
        <taxon>Pseudomonadota</taxon>
        <taxon>Gammaproteobacteria</taxon>
        <taxon>Chromatiales</taxon>
        <taxon>Ectothiorhodospiraceae</taxon>
        <taxon>Halorhodospira</taxon>
    </lineage>
</organism>
<comment type="function">
    <text evidence="1">Catalyzes the transfer of a phosphate group to glutamate to form L-glutamate 5-phosphate.</text>
</comment>
<comment type="catalytic activity">
    <reaction evidence="1">
        <text>L-glutamate + ATP = L-glutamyl 5-phosphate + ADP</text>
        <dbReference type="Rhea" id="RHEA:14877"/>
        <dbReference type="ChEBI" id="CHEBI:29985"/>
        <dbReference type="ChEBI" id="CHEBI:30616"/>
        <dbReference type="ChEBI" id="CHEBI:58274"/>
        <dbReference type="ChEBI" id="CHEBI:456216"/>
        <dbReference type="EC" id="2.7.2.11"/>
    </reaction>
</comment>
<comment type="pathway">
    <text evidence="1">Amino-acid biosynthesis; L-proline biosynthesis; L-glutamate 5-semialdehyde from L-glutamate: step 1/2.</text>
</comment>
<comment type="subcellular location">
    <subcellularLocation>
        <location evidence="1">Cytoplasm</location>
    </subcellularLocation>
</comment>
<comment type="similarity">
    <text evidence="1">Belongs to the glutamate 5-kinase family.</text>
</comment>
<reference key="1">
    <citation type="submission" date="2006-12" db="EMBL/GenBank/DDBJ databases">
        <title>Complete sequence of Halorhodospira halophila SL1.</title>
        <authorList>
            <consortium name="US DOE Joint Genome Institute"/>
            <person name="Copeland A."/>
            <person name="Lucas S."/>
            <person name="Lapidus A."/>
            <person name="Barry K."/>
            <person name="Detter J.C."/>
            <person name="Glavina del Rio T."/>
            <person name="Hammon N."/>
            <person name="Israni S."/>
            <person name="Dalin E."/>
            <person name="Tice H."/>
            <person name="Pitluck S."/>
            <person name="Saunders E."/>
            <person name="Brettin T."/>
            <person name="Bruce D."/>
            <person name="Han C."/>
            <person name="Tapia R."/>
            <person name="Schmutz J."/>
            <person name="Larimer F."/>
            <person name="Land M."/>
            <person name="Hauser L."/>
            <person name="Kyrpides N."/>
            <person name="Mikhailova N."/>
            <person name="Hoff W."/>
            <person name="Richardson P."/>
        </authorList>
    </citation>
    <scope>NUCLEOTIDE SEQUENCE [LARGE SCALE GENOMIC DNA]</scope>
    <source>
        <strain>DSM 244 / SL1</strain>
    </source>
</reference>
<keyword id="KW-0028">Amino-acid biosynthesis</keyword>
<keyword id="KW-0067">ATP-binding</keyword>
<keyword id="KW-0963">Cytoplasm</keyword>
<keyword id="KW-0418">Kinase</keyword>
<keyword id="KW-0547">Nucleotide-binding</keyword>
<keyword id="KW-0641">Proline biosynthesis</keyword>
<keyword id="KW-1185">Reference proteome</keyword>
<keyword id="KW-0808">Transferase</keyword>
<protein>
    <recommendedName>
        <fullName evidence="1">Glutamate 5-kinase</fullName>
        <ecNumber evidence="1">2.7.2.11</ecNumber>
    </recommendedName>
    <alternativeName>
        <fullName evidence="1">Gamma-glutamyl kinase</fullName>
        <shortName evidence="1">GK</shortName>
    </alternativeName>
</protein>
<dbReference type="EC" id="2.7.2.11" evidence="1"/>
<dbReference type="EMBL" id="CP000544">
    <property type="protein sequence ID" value="ABM62609.1"/>
    <property type="molecule type" value="Genomic_DNA"/>
</dbReference>
<dbReference type="RefSeq" id="WP_011814631.1">
    <property type="nucleotide sequence ID" value="NC_008789.1"/>
</dbReference>
<dbReference type="SMR" id="A1WY47"/>
<dbReference type="STRING" id="349124.Hhal_1845"/>
<dbReference type="KEGG" id="hha:Hhal_1845"/>
<dbReference type="eggNOG" id="COG0263">
    <property type="taxonomic scope" value="Bacteria"/>
</dbReference>
<dbReference type="HOGENOM" id="CLU_025400_2_0_6"/>
<dbReference type="OrthoDB" id="9804434at2"/>
<dbReference type="UniPathway" id="UPA00098">
    <property type="reaction ID" value="UER00359"/>
</dbReference>
<dbReference type="Proteomes" id="UP000000647">
    <property type="component" value="Chromosome"/>
</dbReference>
<dbReference type="GO" id="GO:0005829">
    <property type="term" value="C:cytosol"/>
    <property type="evidence" value="ECO:0007669"/>
    <property type="project" value="TreeGrafter"/>
</dbReference>
<dbReference type="GO" id="GO:0005524">
    <property type="term" value="F:ATP binding"/>
    <property type="evidence" value="ECO:0007669"/>
    <property type="project" value="UniProtKB-KW"/>
</dbReference>
<dbReference type="GO" id="GO:0004349">
    <property type="term" value="F:glutamate 5-kinase activity"/>
    <property type="evidence" value="ECO:0007669"/>
    <property type="project" value="UniProtKB-UniRule"/>
</dbReference>
<dbReference type="GO" id="GO:0003723">
    <property type="term" value="F:RNA binding"/>
    <property type="evidence" value="ECO:0007669"/>
    <property type="project" value="InterPro"/>
</dbReference>
<dbReference type="GO" id="GO:0055129">
    <property type="term" value="P:L-proline biosynthetic process"/>
    <property type="evidence" value="ECO:0007669"/>
    <property type="project" value="UniProtKB-UniRule"/>
</dbReference>
<dbReference type="CDD" id="cd04242">
    <property type="entry name" value="AAK_G5K_ProB"/>
    <property type="match status" value="1"/>
</dbReference>
<dbReference type="CDD" id="cd21157">
    <property type="entry name" value="PUA_G5K"/>
    <property type="match status" value="1"/>
</dbReference>
<dbReference type="FunFam" id="2.30.130.10:FF:000007">
    <property type="entry name" value="Glutamate 5-kinase"/>
    <property type="match status" value="1"/>
</dbReference>
<dbReference type="FunFam" id="3.40.1160.10:FF:000018">
    <property type="entry name" value="Glutamate 5-kinase"/>
    <property type="match status" value="1"/>
</dbReference>
<dbReference type="Gene3D" id="3.40.1160.10">
    <property type="entry name" value="Acetylglutamate kinase-like"/>
    <property type="match status" value="1"/>
</dbReference>
<dbReference type="Gene3D" id="2.30.130.10">
    <property type="entry name" value="PUA domain"/>
    <property type="match status" value="1"/>
</dbReference>
<dbReference type="HAMAP" id="MF_00456">
    <property type="entry name" value="ProB"/>
    <property type="match status" value="1"/>
</dbReference>
<dbReference type="InterPro" id="IPR036393">
    <property type="entry name" value="AceGlu_kinase-like_sf"/>
</dbReference>
<dbReference type="InterPro" id="IPR001048">
    <property type="entry name" value="Asp/Glu/Uridylate_kinase"/>
</dbReference>
<dbReference type="InterPro" id="IPR041739">
    <property type="entry name" value="G5K_ProB"/>
</dbReference>
<dbReference type="InterPro" id="IPR001057">
    <property type="entry name" value="Glu/AcGlu_kinase"/>
</dbReference>
<dbReference type="InterPro" id="IPR011529">
    <property type="entry name" value="Glu_5kinase"/>
</dbReference>
<dbReference type="InterPro" id="IPR005715">
    <property type="entry name" value="Glu_5kinase/COase_Synthase"/>
</dbReference>
<dbReference type="InterPro" id="IPR002478">
    <property type="entry name" value="PUA"/>
</dbReference>
<dbReference type="InterPro" id="IPR015947">
    <property type="entry name" value="PUA-like_sf"/>
</dbReference>
<dbReference type="InterPro" id="IPR036974">
    <property type="entry name" value="PUA_sf"/>
</dbReference>
<dbReference type="NCBIfam" id="TIGR01027">
    <property type="entry name" value="proB"/>
    <property type="match status" value="1"/>
</dbReference>
<dbReference type="PANTHER" id="PTHR43654">
    <property type="entry name" value="GLUTAMATE 5-KINASE"/>
    <property type="match status" value="1"/>
</dbReference>
<dbReference type="PANTHER" id="PTHR43654:SF1">
    <property type="entry name" value="ISOPENTENYL PHOSPHATE KINASE"/>
    <property type="match status" value="1"/>
</dbReference>
<dbReference type="Pfam" id="PF00696">
    <property type="entry name" value="AA_kinase"/>
    <property type="match status" value="1"/>
</dbReference>
<dbReference type="Pfam" id="PF01472">
    <property type="entry name" value="PUA"/>
    <property type="match status" value="1"/>
</dbReference>
<dbReference type="PIRSF" id="PIRSF000729">
    <property type="entry name" value="GK"/>
    <property type="match status" value="1"/>
</dbReference>
<dbReference type="PRINTS" id="PR00474">
    <property type="entry name" value="GLU5KINASE"/>
</dbReference>
<dbReference type="SMART" id="SM00359">
    <property type="entry name" value="PUA"/>
    <property type="match status" value="1"/>
</dbReference>
<dbReference type="SUPFAM" id="SSF53633">
    <property type="entry name" value="Carbamate kinase-like"/>
    <property type="match status" value="1"/>
</dbReference>
<dbReference type="SUPFAM" id="SSF88697">
    <property type="entry name" value="PUA domain-like"/>
    <property type="match status" value="1"/>
</dbReference>
<dbReference type="PROSITE" id="PS50890">
    <property type="entry name" value="PUA"/>
    <property type="match status" value="1"/>
</dbReference>
<name>PROB_HALHL</name>
<evidence type="ECO:0000255" key="1">
    <source>
        <dbReference type="HAMAP-Rule" id="MF_00456"/>
    </source>
</evidence>
<feature type="chain" id="PRO_1000081065" description="Glutamate 5-kinase">
    <location>
        <begin position="1"/>
        <end position="376"/>
    </location>
</feature>
<feature type="domain" description="PUA" evidence="1">
    <location>
        <begin position="283"/>
        <end position="361"/>
    </location>
</feature>
<feature type="binding site" evidence="1">
    <location>
        <position position="16"/>
    </location>
    <ligand>
        <name>ATP</name>
        <dbReference type="ChEBI" id="CHEBI:30616"/>
    </ligand>
</feature>
<feature type="binding site" evidence="1">
    <location>
        <position position="56"/>
    </location>
    <ligand>
        <name>substrate</name>
    </ligand>
</feature>
<feature type="binding site" evidence="1">
    <location>
        <position position="143"/>
    </location>
    <ligand>
        <name>substrate</name>
    </ligand>
</feature>
<feature type="binding site" evidence="1">
    <location>
        <position position="155"/>
    </location>
    <ligand>
        <name>substrate</name>
    </ligand>
</feature>
<feature type="binding site" evidence="1">
    <location>
        <begin position="175"/>
        <end position="176"/>
    </location>
    <ligand>
        <name>ATP</name>
        <dbReference type="ChEBI" id="CHEBI:30616"/>
    </ligand>
</feature>
<gene>
    <name evidence="1" type="primary">proB</name>
    <name type="ordered locus">Hhal_1845</name>
</gene>
<accession>A1WY47</accession>
<sequence length="376" mass="40684">MRRREALRQAQRWVIKVGSALITDDGRGLAHEQMSAWADQVAALRKAGRQVTLVSSGAVAEGMQRLGWRSRPRALYQLQAAAGVGQSGLVHAWSDGLARHRLQTAQVLLTHDDLSDRRRYLNARSALREMLRLGVVPVVNENDTVVTDEIRFGDNDTLAALVANLVEAEALVVLTDQPGLMDRDPREHPDAVLLDEVRAGDPELERLCGSPAGVLGRGGMLTKVRGAERAARSGTYTVVASGREGRVIQRLADAEPGLGTLFVPDQEPLAARKQWLASHLQTRGALSLDEGAARALRESGKSLLPVGVVAVEGGFSRGEMVVCRDPAGIEVARGLVNYAAEEARLICGRASRDIETTLGYVDEPELIHRDNMVVTV</sequence>
<proteinExistence type="inferred from homology"/>